<organism>
    <name type="scientific">Saccharopolyspora erythraea (strain ATCC 11635 / DSM 40517 / JCM 4748 / NBRC 13426 / NCIMB 8594 / NRRL 2338)</name>
    <dbReference type="NCBI Taxonomy" id="405948"/>
    <lineage>
        <taxon>Bacteria</taxon>
        <taxon>Bacillati</taxon>
        <taxon>Actinomycetota</taxon>
        <taxon>Actinomycetes</taxon>
        <taxon>Pseudonocardiales</taxon>
        <taxon>Pseudonocardiaceae</taxon>
        <taxon>Saccharopolyspora</taxon>
    </lineage>
</organism>
<dbReference type="EC" id="1.1.1.86" evidence="1"/>
<dbReference type="EMBL" id="AM420293">
    <property type="protein sequence ID" value="CAM05330.1"/>
    <property type="molecule type" value="Genomic_DNA"/>
</dbReference>
<dbReference type="RefSeq" id="WP_009944398.1">
    <property type="nucleotide sequence ID" value="NC_009142.1"/>
</dbReference>
<dbReference type="SMR" id="A4FMQ5"/>
<dbReference type="STRING" id="405948.SACE_6157"/>
<dbReference type="KEGG" id="sen:SACE_6157"/>
<dbReference type="eggNOG" id="COG0059">
    <property type="taxonomic scope" value="Bacteria"/>
</dbReference>
<dbReference type="HOGENOM" id="CLU_033821_0_1_11"/>
<dbReference type="OrthoDB" id="9804088at2"/>
<dbReference type="UniPathway" id="UPA00047">
    <property type="reaction ID" value="UER00056"/>
</dbReference>
<dbReference type="UniPathway" id="UPA00049">
    <property type="reaction ID" value="UER00060"/>
</dbReference>
<dbReference type="Proteomes" id="UP000006728">
    <property type="component" value="Chromosome"/>
</dbReference>
<dbReference type="GO" id="GO:0005829">
    <property type="term" value="C:cytosol"/>
    <property type="evidence" value="ECO:0007669"/>
    <property type="project" value="TreeGrafter"/>
</dbReference>
<dbReference type="GO" id="GO:0004455">
    <property type="term" value="F:ketol-acid reductoisomerase activity"/>
    <property type="evidence" value="ECO:0007669"/>
    <property type="project" value="UniProtKB-UniRule"/>
</dbReference>
<dbReference type="GO" id="GO:0000287">
    <property type="term" value="F:magnesium ion binding"/>
    <property type="evidence" value="ECO:0007669"/>
    <property type="project" value="UniProtKB-UniRule"/>
</dbReference>
<dbReference type="GO" id="GO:0050661">
    <property type="term" value="F:NADP binding"/>
    <property type="evidence" value="ECO:0007669"/>
    <property type="project" value="InterPro"/>
</dbReference>
<dbReference type="GO" id="GO:0009097">
    <property type="term" value="P:isoleucine biosynthetic process"/>
    <property type="evidence" value="ECO:0007669"/>
    <property type="project" value="UniProtKB-UniRule"/>
</dbReference>
<dbReference type="GO" id="GO:0009099">
    <property type="term" value="P:L-valine biosynthetic process"/>
    <property type="evidence" value="ECO:0007669"/>
    <property type="project" value="UniProtKB-UniRule"/>
</dbReference>
<dbReference type="FunFam" id="3.40.50.720:FF:000023">
    <property type="entry name" value="Ketol-acid reductoisomerase (NADP(+))"/>
    <property type="match status" value="1"/>
</dbReference>
<dbReference type="Gene3D" id="6.10.240.10">
    <property type="match status" value="1"/>
</dbReference>
<dbReference type="Gene3D" id="3.40.50.720">
    <property type="entry name" value="NAD(P)-binding Rossmann-like Domain"/>
    <property type="match status" value="1"/>
</dbReference>
<dbReference type="HAMAP" id="MF_00435">
    <property type="entry name" value="IlvC"/>
    <property type="match status" value="1"/>
</dbReference>
<dbReference type="InterPro" id="IPR008927">
    <property type="entry name" value="6-PGluconate_DH-like_C_sf"/>
</dbReference>
<dbReference type="InterPro" id="IPR013023">
    <property type="entry name" value="KARI"/>
</dbReference>
<dbReference type="InterPro" id="IPR000506">
    <property type="entry name" value="KARI_C"/>
</dbReference>
<dbReference type="InterPro" id="IPR013116">
    <property type="entry name" value="KARI_N"/>
</dbReference>
<dbReference type="InterPro" id="IPR014359">
    <property type="entry name" value="KARI_prok"/>
</dbReference>
<dbReference type="InterPro" id="IPR036291">
    <property type="entry name" value="NAD(P)-bd_dom_sf"/>
</dbReference>
<dbReference type="NCBIfam" id="TIGR00465">
    <property type="entry name" value="ilvC"/>
    <property type="match status" value="1"/>
</dbReference>
<dbReference type="NCBIfam" id="NF004017">
    <property type="entry name" value="PRK05479.1"/>
    <property type="match status" value="1"/>
</dbReference>
<dbReference type="NCBIfam" id="NF009940">
    <property type="entry name" value="PRK13403.1"/>
    <property type="match status" value="1"/>
</dbReference>
<dbReference type="PANTHER" id="PTHR21371">
    <property type="entry name" value="KETOL-ACID REDUCTOISOMERASE, MITOCHONDRIAL"/>
    <property type="match status" value="1"/>
</dbReference>
<dbReference type="PANTHER" id="PTHR21371:SF1">
    <property type="entry name" value="KETOL-ACID REDUCTOISOMERASE, MITOCHONDRIAL"/>
    <property type="match status" value="1"/>
</dbReference>
<dbReference type="Pfam" id="PF01450">
    <property type="entry name" value="KARI_C"/>
    <property type="match status" value="1"/>
</dbReference>
<dbReference type="Pfam" id="PF07991">
    <property type="entry name" value="KARI_N"/>
    <property type="match status" value="1"/>
</dbReference>
<dbReference type="PIRSF" id="PIRSF000116">
    <property type="entry name" value="IlvC_gammaproteo"/>
    <property type="match status" value="1"/>
</dbReference>
<dbReference type="SUPFAM" id="SSF48179">
    <property type="entry name" value="6-phosphogluconate dehydrogenase C-terminal domain-like"/>
    <property type="match status" value="1"/>
</dbReference>
<dbReference type="SUPFAM" id="SSF51735">
    <property type="entry name" value="NAD(P)-binding Rossmann-fold domains"/>
    <property type="match status" value="1"/>
</dbReference>
<dbReference type="PROSITE" id="PS51851">
    <property type="entry name" value="KARI_C"/>
    <property type="match status" value="1"/>
</dbReference>
<dbReference type="PROSITE" id="PS51850">
    <property type="entry name" value="KARI_N"/>
    <property type="match status" value="1"/>
</dbReference>
<feature type="chain" id="PRO_1000050573" description="Ketol-acid reductoisomerase (NADP(+))">
    <location>
        <begin position="1"/>
        <end position="332"/>
    </location>
</feature>
<feature type="domain" description="KARI N-terminal Rossmann" evidence="2">
    <location>
        <begin position="3"/>
        <end position="183"/>
    </location>
</feature>
<feature type="domain" description="KARI C-terminal knotted" evidence="3">
    <location>
        <begin position="184"/>
        <end position="329"/>
    </location>
</feature>
<feature type="active site" evidence="1">
    <location>
        <position position="109"/>
    </location>
</feature>
<feature type="binding site" evidence="1">
    <location>
        <begin position="26"/>
        <end position="29"/>
    </location>
    <ligand>
        <name>NADP(+)</name>
        <dbReference type="ChEBI" id="CHEBI:58349"/>
    </ligand>
</feature>
<feature type="binding site" evidence="1">
    <location>
        <position position="52"/>
    </location>
    <ligand>
        <name>NADP(+)</name>
        <dbReference type="ChEBI" id="CHEBI:58349"/>
    </ligand>
</feature>
<feature type="binding site" evidence="1">
    <location>
        <position position="54"/>
    </location>
    <ligand>
        <name>NADP(+)</name>
        <dbReference type="ChEBI" id="CHEBI:58349"/>
    </ligand>
</feature>
<feature type="binding site" evidence="1">
    <location>
        <begin position="84"/>
        <end position="87"/>
    </location>
    <ligand>
        <name>NADP(+)</name>
        <dbReference type="ChEBI" id="CHEBI:58349"/>
    </ligand>
</feature>
<feature type="binding site" evidence="1">
    <location>
        <position position="135"/>
    </location>
    <ligand>
        <name>NADP(+)</name>
        <dbReference type="ChEBI" id="CHEBI:58349"/>
    </ligand>
</feature>
<feature type="binding site" evidence="1">
    <location>
        <position position="192"/>
    </location>
    <ligand>
        <name>Mg(2+)</name>
        <dbReference type="ChEBI" id="CHEBI:18420"/>
        <label>1</label>
    </ligand>
</feature>
<feature type="binding site" evidence="1">
    <location>
        <position position="192"/>
    </location>
    <ligand>
        <name>Mg(2+)</name>
        <dbReference type="ChEBI" id="CHEBI:18420"/>
        <label>2</label>
    </ligand>
</feature>
<feature type="binding site" evidence="1">
    <location>
        <position position="196"/>
    </location>
    <ligand>
        <name>Mg(2+)</name>
        <dbReference type="ChEBI" id="CHEBI:18420"/>
        <label>1</label>
    </ligand>
</feature>
<feature type="binding site" evidence="1">
    <location>
        <position position="228"/>
    </location>
    <ligand>
        <name>Mg(2+)</name>
        <dbReference type="ChEBI" id="CHEBI:18420"/>
        <label>2</label>
    </ligand>
</feature>
<feature type="binding site" evidence="1">
    <location>
        <position position="232"/>
    </location>
    <ligand>
        <name>Mg(2+)</name>
        <dbReference type="ChEBI" id="CHEBI:18420"/>
        <label>2</label>
    </ligand>
</feature>
<feature type="binding site" evidence="1">
    <location>
        <position position="253"/>
    </location>
    <ligand>
        <name>substrate</name>
    </ligand>
</feature>
<name>ILVC_SACEN</name>
<comment type="function">
    <text evidence="1">Involved in the biosynthesis of branched-chain amino acids (BCAA). Catalyzes an alkyl-migration followed by a ketol-acid reduction of (S)-2-acetolactate (S2AL) to yield (R)-2,3-dihydroxy-isovalerate. In the isomerase reaction, S2AL is rearranged via a Mg-dependent methyl migration to produce 3-hydroxy-3-methyl-2-ketobutyrate (HMKB). In the reductase reaction, this 2-ketoacid undergoes a metal-dependent reduction by NADPH to yield (R)-2,3-dihydroxy-isovalerate.</text>
</comment>
<comment type="catalytic activity">
    <reaction evidence="1">
        <text>(2R)-2,3-dihydroxy-3-methylbutanoate + NADP(+) = (2S)-2-acetolactate + NADPH + H(+)</text>
        <dbReference type="Rhea" id="RHEA:22068"/>
        <dbReference type="ChEBI" id="CHEBI:15378"/>
        <dbReference type="ChEBI" id="CHEBI:49072"/>
        <dbReference type="ChEBI" id="CHEBI:57783"/>
        <dbReference type="ChEBI" id="CHEBI:58349"/>
        <dbReference type="ChEBI" id="CHEBI:58476"/>
        <dbReference type="EC" id="1.1.1.86"/>
    </reaction>
</comment>
<comment type="catalytic activity">
    <reaction evidence="1">
        <text>(2R,3R)-2,3-dihydroxy-3-methylpentanoate + NADP(+) = (S)-2-ethyl-2-hydroxy-3-oxobutanoate + NADPH + H(+)</text>
        <dbReference type="Rhea" id="RHEA:13493"/>
        <dbReference type="ChEBI" id="CHEBI:15378"/>
        <dbReference type="ChEBI" id="CHEBI:49256"/>
        <dbReference type="ChEBI" id="CHEBI:49258"/>
        <dbReference type="ChEBI" id="CHEBI:57783"/>
        <dbReference type="ChEBI" id="CHEBI:58349"/>
        <dbReference type="EC" id="1.1.1.86"/>
    </reaction>
</comment>
<comment type="cofactor">
    <cofactor evidence="1">
        <name>Mg(2+)</name>
        <dbReference type="ChEBI" id="CHEBI:18420"/>
    </cofactor>
    <text evidence="1">Binds 2 magnesium ions per subunit.</text>
</comment>
<comment type="pathway">
    <text evidence="1">Amino-acid biosynthesis; L-isoleucine biosynthesis; L-isoleucine from 2-oxobutanoate: step 2/4.</text>
</comment>
<comment type="pathway">
    <text evidence="1">Amino-acid biosynthesis; L-valine biosynthesis; L-valine from pyruvate: step 2/4.</text>
</comment>
<comment type="similarity">
    <text evidence="1">Belongs to the ketol-acid reductoisomerase family.</text>
</comment>
<protein>
    <recommendedName>
        <fullName evidence="1">Ketol-acid reductoisomerase (NADP(+))</fullName>
        <shortName evidence="1">KARI</shortName>
        <ecNumber evidence="1">1.1.1.86</ecNumber>
    </recommendedName>
    <alternativeName>
        <fullName evidence="1">Acetohydroxy-acid isomeroreductase</fullName>
        <shortName evidence="1">AHIR</shortName>
    </alternativeName>
    <alternativeName>
        <fullName evidence="1">Alpha-keto-beta-hydroxylacyl reductoisomerase</fullName>
    </alternativeName>
    <alternativeName>
        <fullName evidence="1">Ketol-acid reductoisomerase type 1</fullName>
    </alternativeName>
    <alternativeName>
        <fullName evidence="1">Ketol-acid reductoisomerase type I</fullName>
    </alternativeName>
</protein>
<gene>
    <name evidence="1" type="primary">ilvC</name>
    <name type="ordered locus">SACE_6157</name>
</gene>
<proteinExistence type="inferred from homology"/>
<accession>A4FMQ5</accession>
<evidence type="ECO:0000255" key="1">
    <source>
        <dbReference type="HAMAP-Rule" id="MF_00435"/>
    </source>
</evidence>
<evidence type="ECO:0000255" key="2">
    <source>
        <dbReference type="PROSITE-ProRule" id="PRU01197"/>
    </source>
</evidence>
<evidence type="ECO:0000255" key="3">
    <source>
        <dbReference type="PROSITE-ProRule" id="PRU01198"/>
    </source>
</evidence>
<keyword id="KW-0028">Amino-acid biosynthesis</keyword>
<keyword id="KW-0100">Branched-chain amino acid biosynthesis</keyword>
<keyword id="KW-0460">Magnesium</keyword>
<keyword id="KW-0479">Metal-binding</keyword>
<keyword id="KW-0521">NADP</keyword>
<keyword id="KW-0560">Oxidoreductase</keyword>
<keyword id="KW-1185">Reference proteome</keyword>
<reference key="1">
    <citation type="journal article" date="2007" name="Nat. Biotechnol.">
        <title>Complete genome sequence of the erythromycin-producing bacterium Saccharopolyspora erythraea NRRL23338.</title>
        <authorList>
            <person name="Oliynyk M."/>
            <person name="Samborskyy M."/>
            <person name="Lester J.B."/>
            <person name="Mironenko T."/>
            <person name="Scott N."/>
            <person name="Dickens S."/>
            <person name="Haydock S.F."/>
            <person name="Leadlay P.F."/>
        </authorList>
    </citation>
    <scope>NUCLEOTIDE SEQUENCE [LARGE SCALE GENOMIC DNA]</scope>
    <source>
        <strain>ATCC 11635 / DSM 40517 / JCM 4748 / NBRC 13426 / NCIMB 8594 / NRRL 2338</strain>
    </source>
</reference>
<sequence>MATEIFYDADADLGIIQGRKVAVIGYGSQGHAHALSLRDSGADVRIGLPEGSKSRAKAEEEGLRVLTPAEASAEADLIMILAPDTKQRQIYADDIAPNLKSGDALFFGHGFNIRYGLIKPPSDVDVAMVAPKGPGHLVRRQFVDGKGVPCLIAVEQDASGNAQALALSYAAGIGGARAGVIKTTFTEETETDLFGEQAVLCGGASALVQTGFEVLVEAGYQPEIAYFEVLHELKLIVDLMWEGGIAGQRYSISDTAEYGDLTRGPRVIDAHVKESMRKILAEVQDGTFAKEWVAEDEAGRPNFNKLQDQGNAHQIEEVGKKLRSLMSWTQRP</sequence>